<evidence type="ECO:0000250" key="1">
    <source>
        <dbReference type="UniProtKB" id="D3ZJ25"/>
    </source>
</evidence>
<evidence type="ECO:0000250" key="2">
    <source>
        <dbReference type="UniProtKB" id="O59010"/>
    </source>
</evidence>
<evidence type="ECO:0000250" key="3">
    <source>
        <dbReference type="UniProtKB" id="P43003"/>
    </source>
</evidence>
<evidence type="ECO:0000250" key="4">
    <source>
        <dbReference type="UniProtKB" id="P51912"/>
    </source>
</evidence>
<evidence type="ECO:0000250" key="5">
    <source>
        <dbReference type="UniProtKB" id="Q15758"/>
    </source>
</evidence>
<evidence type="ECO:0000255" key="6"/>
<evidence type="ECO:0000256" key="7">
    <source>
        <dbReference type="SAM" id="MobiDB-lite"/>
    </source>
</evidence>
<evidence type="ECO:0000305" key="8"/>
<gene>
    <name type="primary">SLC1A5</name>
    <name type="ORF">QtsA-11272</name>
</gene>
<sequence>MVADPPRGDSKGLAAAEPTANGGLALASIEDQGEAAGGCCGSRDRVRRCLRANLLVLLTVVAVVVGVALGLGVSGAGGALALGPERLSAFVFPGELLLRLLRMIILPLVVCSLIGGAASLDPGALGRLGAWALLFFLVTTLLASALGVALALALQPGAASAAINASVGAAGSAENAPKKEVLDSFLDLARNIFPSNLVSAAFRSYSTSYEERNITGTRVKVPVGQEVEGMNILGLVVFAIVFGVALRKLGPEGELLIRFFNSFNEATMVLVSWIMWYAPVGIMFLVAGKIVEMEDVGLLFARLGKYILCCLLGHAIHGLLVLPLIYFLFTRKNPYRFLWGIVTPLATAFGTSSSSATLPLMMKCVEENNGVAKHISRFILPIGATVNMDGAALFQCVAAVFIAQLSEQSLDFVKIITILVTATASSVGAAGIPAGGVLTLAIILEAVNLPVDHISLILAVDWLVDRSCTVLNVEGDALGAGLLQNYVDRTEVRSTEPELIQVKSELPLDPLPAPTEEGNPLLRHYRGPAGDATVASEKESVM</sequence>
<dbReference type="EMBL" id="AB168329">
    <property type="protein sequence ID" value="BAE00453.1"/>
    <property type="molecule type" value="mRNA"/>
</dbReference>
<dbReference type="RefSeq" id="NP_001270983.1">
    <property type="nucleotide sequence ID" value="NM_001284054.1"/>
</dbReference>
<dbReference type="RefSeq" id="XP_045235876.1">
    <property type="nucleotide sequence ID" value="XM_045379941.2"/>
</dbReference>
<dbReference type="SMR" id="Q4R8W8"/>
<dbReference type="STRING" id="9541.ENSMFAP00000027021"/>
<dbReference type="GlyCosmos" id="Q4R8W8">
    <property type="glycosylation" value="2 sites, No reported glycans"/>
</dbReference>
<dbReference type="ABCD" id="Q4R8W8">
    <property type="antibodies" value="4 sequenced antibodies"/>
</dbReference>
<dbReference type="GeneID" id="101867392"/>
<dbReference type="eggNOG" id="KOG3787">
    <property type="taxonomic scope" value="Eukaryota"/>
</dbReference>
<dbReference type="Proteomes" id="UP000233100">
    <property type="component" value="Unplaced"/>
</dbReference>
<dbReference type="GO" id="GO:0042470">
    <property type="term" value="C:melanosome"/>
    <property type="evidence" value="ECO:0007669"/>
    <property type="project" value="UniProtKB-SubCell"/>
</dbReference>
<dbReference type="GO" id="GO:0016020">
    <property type="term" value="C:membrane"/>
    <property type="evidence" value="ECO:0000250"/>
    <property type="project" value="UniProtKB"/>
</dbReference>
<dbReference type="GO" id="GO:0005886">
    <property type="term" value="C:plasma membrane"/>
    <property type="evidence" value="ECO:0007669"/>
    <property type="project" value="UniProtKB-SubCell"/>
</dbReference>
<dbReference type="GO" id="GO:0015297">
    <property type="term" value="F:antiporter activity"/>
    <property type="evidence" value="ECO:0007669"/>
    <property type="project" value="UniProtKB-KW"/>
</dbReference>
<dbReference type="GO" id="GO:0015183">
    <property type="term" value="F:L-aspartate transmembrane transporter activity"/>
    <property type="evidence" value="ECO:0007669"/>
    <property type="project" value="TreeGrafter"/>
</dbReference>
<dbReference type="GO" id="GO:0015186">
    <property type="term" value="F:L-glutamine transmembrane transporter activity"/>
    <property type="evidence" value="ECO:0000250"/>
    <property type="project" value="UniProtKB"/>
</dbReference>
<dbReference type="GO" id="GO:0046872">
    <property type="term" value="F:metal ion binding"/>
    <property type="evidence" value="ECO:0007669"/>
    <property type="project" value="UniProtKB-KW"/>
</dbReference>
<dbReference type="GO" id="GO:0015293">
    <property type="term" value="F:symporter activity"/>
    <property type="evidence" value="ECO:0007669"/>
    <property type="project" value="UniProtKB-KW"/>
</dbReference>
<dbReference type="GO" id="GO:0006868">
    <property type="term" value="P:glutamine transport"/>
    <property type="evidence" value="ECO:0000250"/>
    <property type="project" value="UniProtKB"/>
</dbReference>
<dbReference type="GO" id="GO:0140009">
    <property type="term" value="P:L-aspartate import across plasma membrane"/>
    <property type="evidence" value="ECO:0007669"/>
    <property type="project" value="TreeGrafter"/>
</dbReference>
<dbReference type="GO" id="GO:0070207">
    <property type="term" value="P:protein homotrimerization"/>
    <property type="evidence" value="ECO:0000250"/>
    <property type="project" value="UniProtKB"/>
</dbReference>
<dbReference type="FunFam" id="1.10.3860.10:FF:000005">
    <property type="entry name" value="Amino acid transporter"/>
    <property type="match status" value="1"/>
</dbReference>
<dbReference type="Gene3D" id="1.10.3860.10">
    <property type="entry name" value="Sodium:dicarboxylate symporter"/>
    <property type="match status" value="1"/>
</dbReference>
<dbReference type="InterPro" id="IPR050746">
    <property type="entry name" value="DAACS"/>
</dbReference>
<dbReference type="InterPro" id="IPR001991">
    <property type="entry name" value="Na-dicarboxylate_symporter"/>
</dbReference>
<dbReference type="InterPro" id="IPR018107">
    <property type="entry name" value="Na-dicarboxylate_symporter_CS"/>
</dbReference>
<dbReference type="InterPro" id="IPR036458">
    <property type="entry name" value="Na:dicarbo_symporter_sf"/>
</dbReference>
<dbReference type="PANTHER" id="PTHR11958:SF19">
    <property type="entry name" value="NEUTRAL AMINO ACID TRANSPORTER B(0)"/>
    <property type="match status" value="1"/>
</dbReference>
<dbReference type="PANTHER" id="PTHR11958">
    <property type="entry name" value="SODIUM/DICARBOXYLATE SYMPORTER-RELATED"/>
    <property type="match status" value="1"/>
</dbReference>
<dbReference type="Pfam" id="PF00375">
    <property type="entry name" value="SDF"/>
    <property type="match status" value="1"/>
</dbReference>
<dbReference type="PRINTS" id="PR00173">
    <property type="entry name" value="EDTRNSPORT"/>
</dbReference>
<dbReference type="SUPFAM" id="SSF118215">
    <property type="entry name" value="Proton glutamate symport protein"/>
    <property type="match status" value="1"/>
</dbReference>
<dbReference type="PROSITE" id="PS00713">
    <property type="entry name" value="NA_DICARBOXYL_SYMP_1"/>
    <property type="match status" value="1"/>
</dbReference>
<dbReference type="PROSITE" id="PS00714">
    <property type="entry name" value="NA_DICARBOXYL_SYMP_2"/>
    <property type="match status" value="1"/>
</dbReference>
<proteinExistence type="evidence at transcript level"/>
<organism>
    <name type="scientific">Macaca fascicularis</name>
    <name type="common">Crab-eating macaque</name>
    <name type="synonym">Cynomolgus monkey</name>
    <dbReference type="NCBI Taxonomy" id="9541"/>
    <lineage>
        <taxon>Eukaryota</taxon>
        <taxon>Metazoa</taxon>
        <taxon>Chordata</taxon>
        <taxon>Craniata</taxon>
        <taxon>Vertebrata</taxon>
        <taxon>Euteleostomi</taxon>
        <taxon>Mammalia</taxon>
        <taxon>Eutheria</taxon>
        <taxon>Euarchontoglires</taxon>
        <taxon>Primates</taxon>
        <taxon>Haplorrhini</taxon>
        <taxon>Catarrhini</taxon>
        <taxon>Cercopithecidae</taxon>
        <taxon>Cercopithecinae</taxon>
        <taxon>Macaca</taxon>
    </lineage>
</organism>
<reference key="1">
    <citation type="submission" date="2005-06" db="EMBL/GenBank/DDBJ databases">
        <title>DNA sequences of macaque genes expressed in brain or testis and its evolutionary implications.</title>
        <authorList>
            <consortium name="International consortium for macaque cDNA sequencing and analysis"/>
        </authorList>
    </citation>
    <scope>NUCLEOTIDE SEQUENCE [LARGE SCALE MRNA]</scope>
    <source>
        <tissue>Testis</tissue>
    </source>
</reference>
<comment type="function">
    <text evidence="1 5">Sodium-coupled antiporter of neutral amino acids. In a tri-substrate transport cycle, exchanges neutral amino acids between the extracellular and intracellular compartments, coupled to the inward cotransport of at least one sodium ion (By similarity). The preferred substrate is the essential amino acid L-glutamine, a precursor for biosynthesis of proteins, nucleotides and amine sugars as well as an alternative fuel for mitochondrial oxidative phosphorylation. Exchanges L-glutamine with other neutral amino acids such as L-serine, L-threonine and L-asparagine in a bidirectional way. Provides L-glutamine to proliferating stem and activated cells driving the metabolic switch toward cell differentiation (By similarity). The transport cycle is usually pH-independent, with the exception of L-glutamate. Transports extracellular L-glutamate coupled to the cotransport of one proton and one sodium ion in exchange for intracellular L-glutamine counter-ion. May provide for L-glutamate uptake in glial cells regulating glutamine/glutamate cycle in the nervous system (By similarity). Can transport D-amino acids. Mediates D-serine release from the retinal glia potentially affecting NMDA receptor function in retinal neurons (By similarity). Displays sodium- and amino acid-dependent but uncoupled channel-like anion conductance with a preference SCN(-) &gt;&gt; NO3(-) &gt; I(-) &gt; Cl(-) (By similarity). Through binding of the fusogenic protein syncytin-1/ERVW-1 may mediate trophoblasts syncytialization, the spontaneous fusion of their plasma membranes, an essential process in placental development (By similarity).</text>
</comment>
<comment type="catalytic activity">
    <reaction evidence="5">
        <text>L-glutamine(out) + L-serine(in) + Na(+)(out) = L-glutamine(in) + L-serine(out) + Na(+)(in)</text>
        <dbReference type="Rhea" id="RHEA:70855"/>
        <dbReference type="ChEBI" id="CHEBI:29101"/>
        <dbReference type="ChEBI" id="CHEBI:33384"/>
        <dbReference type="ChEBI" id="CHEBI:58359"/>
    </reaction>
</comment>
<comment type="catalytic activity">
    <reaction evidence="5">
        <text>L-glutamine(in) + L-serine(out) + Na(+)(out) = L-glutamine(out) + L-serine(in) + Na(+)(in)</text>
        <dbReference type="Rhea" id="RHEA:70887"/>
        <dbReference type="ChEBI" id="CHEBI:29101"/>
        <dbReference type="ChEBI" id="CHEBI:33384"/>
        <dbReference type="ChEBI" id="CHEBI:58359"/>
    </reaction>
</comment>
<comment type="catalytic activity">
    <reaction evidence="5">
        <text>L-threonine(in) + L-glutamine(out) + Na(+)(out) = L-threonine(out) + L-glutamine(in) + Na(+)(in)</text>
        <dbReference type="Rhea" id="RHEA:70863"/>
        <dbReference type="ChEBI" id="CHEBI:29101"/>
        <dbReference type="ChEBI" id="CHEBI:57926"/>
        <dbReference type="ChEBI" id="CHEBI:58359"/>
    </reaction>
</comment>
<comment type="catalytic activity">
    <reaction evidence="5">
        <text>L-threonine(out) + L-glutamine(in) + Na(+)(out) = L-threonine(in) + L-glutamine(out) + Na(+)(in)</text>
        <dbReference type="Rhea" id="RHEA:70879"/>
        <dbReference type="ChEBI" id="CHEBI:29101"/>
        <dbReference type="ChEBI" id="CHEBI:57926"/>
        <dbReference type="ChEBI" id="CHEBI:58359"/>
    </reaction>
</comment>
<comment type="catalytic activity">
    <reaction evidence="5">
        <text>L-asparagine(in) + L-glutamine(out) + Na(+)(out) = L-asparagine(out) + L-glutamine(in) + Na(+)(in)</text>
        <dbReference type="Rhea" id="RHEA:70859"/>
        <dbReference type="ChEBI" id="CHEBI:29101"/>
        <dbReference type="ChEBI" id="CHEBI:58048"/>
        <dbReference type="ChEBI" id="CHEBI:58359"/>
    </reaction>
</comment>
<comment type="catalytic activity">
    <reaction evidence="5">
        <text>L-asparagine(out) + L-glutamine(in) + Na(+)(out) = L-asparagine(in) + L-glutamine(out) + Na(+)(in)</text>
        <dbReference type="Rhea" id="RHEA:70891"/>
        <dbReference type="ChEBI" id="CHEBI:29101"/>
        <dbReference type="ChEBI" id="CHEBI:58048"/>
        <dbReference type="ChEBI" id="CHEBI:58359"/>
    </reaction>
</comment>
<comment type="catalytic activity">
    <reaction evidence="5">
        <text>L-glutamine(in) + L-alanine(out) + Na(+)(out) = L-glutamine(out) + L-alanine(in) + Na(+)(in)</text>
        <dbReference type="Rhea" id="RHEA:70867"/>
        <dbReference type="ChEBI" id="CHEBI:29101"/>
        <dbReference type="ChEBI" id="CHEBI:57972"/>
        <dbReference type="ChEBI" id="CHEBI:58359"/>
    </reaction>
</comment>
<comment type="catalytic activity">
    <reaction evidence="5">
        <text>L-valine(out) + L-glutamine(in) + Na(+)(out) = L-valine(in) + L-glutamine(out) + Na(+)(in)</text>
        <dbReference type="Rhea" id="RHEA:70871"/>
        <dbReference type="ChEBI" id="CHEBI:29101"/>
        <dbReference type="ChEBI" id="CHEBI:57762"/>
        <dbReference type="ChEBI" id="CHEBI:58359"/>
    </reaction>
</comment>
<comment type="catalytic activity">
    <reaction evidence="5">
        <text>L-glutamine(in) + L-methionine(out) + Na(+)(out) = L-glutamine(out) + L-methionine(in) + Na(+)(in)</text>
        <dbReference type="Rhea" id="RHEA:70875"/>
        <dbReference type="ChEBI" id="CHEBI:29101"/>
        <dbReference type="ChEBI" id="CHEBI:57844"/>
        <dbReference type="ChEBI" id="CHEBI:58359"/>
    </reaction>
</comment>
<comment type="catalytic activity">
    <reaction evidence="5">
        <text>L-glutamine(in) + L-glutamate(out) + Na(+)(out) + H(+)(out) = L-glutamine(out) + L-glutamate(in) + Na(+)(in) + H(+)(in)</text>
        <dbReference type="Rhea" id="RHEA:70883"/>
        <dbReference type="ChEBI" id="CHEBI:15378"/>
        <dbReference type="ChEBI" id="CHEBI:29101"/>
        <dbReference type="ChEBI" id="CHEBI:29985"/>
        <dbReference type="ChEBI" id="CHEBI:58359"/>
    </reaction>
</comment>
<comment type="catalytic activity">
    <reaction evidence="5">
        <text>D-serine(in) + L-glutamine(out) + Na(+)(out) = D-serine(out) + L-glutamine(in) + Na(+)(in)</text>
        <dbReference type="Rhea" id="RHEA:75307"/>
        <dbReference type="ChEBI" id="CHEBI:29101"/>
        <dbReference type="ChEBI" id="CHEBI:35247"/>
        <dbReference type="ChEBI" id="CHEBI:58359"/>
    </reaction>
</comment>
<comment type="catalytic activity">
    <reaction evidence="5">
        <text>D-serine(in) + L-alanine(out) + Na(+)(out) = D-serine(out) + L-alanine(in) + Na(+)(in)</text>
        <dbReference type="Rhea" id="RHEA:75311"/>
        <dbReference type="ChEBI" id="CHEBI:29101"/>
        <dbReference type="ChEBI" id="CHEBI:35247"/>
        <dbReference type="ChEBI" id="CHEBI:57972"/>
    </reaction>
</comment>
<comment type="catalytic activity">
    <reaction evidence="1">
        <text>nitrate(in) = nitrate(out)</text>
        <dbReference type="Rhea" id="RHEA:34923"/>
        <dbReference type="ChEBI" id="CHEBI:17632"/>
    </reaction>
</comment>
<comment type="catalytic activity">
    <reaction evidence="1">
        <text>iodide(out) = iodide(in)</text>
        <dbReference type="Rhea" id="RHEA:66324"/>
        <dbReference type="ChEBI" id="CHEBI:16382"/>
    </reaction>
</comment>
<comment type="catalytic activity">
    <reaction evidence="1">
        <text>thiocyanate(in) = thiocyanate(out)</text>
        <dbReference type="Rhea" id="RHEA:75347"/>
        <dbReference type="ChEBI" id="CHEBI:18022"/>
    </reaction>
</comment>
<comment type="subunit">
    <text evidence="5">Homotrimer.</text>
</comment>
<comment type="subcellular location">
    <subcellularLocation>
        <location evidence="4">Cell membrane</location>
        <topology evidence="5">Multi-pass membrane protein</topology>
    </subcellularLocation>
    <subcellularLocation>
        <location evidence="5">Melanosome</location>
    </subcellularLocation>
</comment>
<comment type="similarity">
    <text evidence="8">Belongs to the dicarboxylate/amino acid:cation symporter (DAACS) (TC 2.A.23) family. SLC1A5 subfamily.</text>
</comment>
<name>AAAT_MACFA</name>
<keyword id="KW-0007">Acetylation</keyword>
<keyword id="KW-0029">Amino-acid transport</keyword>
<keyword id="KW-0050">Antiport</keyword>
<keyword id="KW-1003">Cell membrane</keyword>
<keyword id="KW-0325">Glycoprotein</keyword>
<keyword id="KW-0472">Membrane</keyword>
<keyword id="KW-0479">Metal-binding</keyword>
<keyword id="KW-0597">Phosphoprotein</keyword>
<keyword id="KW-1185">Reference proteome</keyword>
<keyword id="KW-0915">Sodium</keyword>
<keyword id="KW-0769">Symport</keyword>
<keyword id="KW-0812">Transmembrane</keyword>
<keyword id="KW-1133">Transmembrane helix</keyword>
<keyword id="KW-0813">Transport</keyword>
<protein>
    <recommendedName>
        <fullName>Neutral amino acid transporter B(0)</fullName>
        <shortName>ATB(0)</shortName>
    </recommendedName>
    <alternativeName>
        <fullName>Solute carrier family 1 member 5</fullName>
    </alternativeName>
</protein>
<accession>Q4R8W8</accession>
<feature type="chain" id="PRO_0000284453" description="Neutral amino acid transporter B(0)">
    <location>
        <begin position="1"/>
        <end position="542"/>
    </location>
</feature>
<feature type="topological domain" description="Cytoplasmic" evidence="8">
    <location>
        <begin position="1"/>
        <end position="52"/>
    </location>
</feature>
<feature type="transmembrane region" description="Helical; Name=1" evidence="3">
    <location>
        <begin position="53"/>
        <end position="82"/>
    </location>
</feature>
<feature type="topological domain" description="Extracellular" evidence="8">
    <location>
        <begin position="83"/>
        <end position="95"/>
    </location>
</feature>
<feature type="transmembrane region" description="Helical; Name=2" evidence="3">
    <location>
        <begin position="96"/>
        <end position="117"/>
    </location>
</feature>
<feature type="topological domain" description="Cytoplasmic" evidence="8">
    <location>
        <begin position="118"/>
        <end position="131"/>
    </location>
</feature>
<feature type="transmembrane region" description="Helical; Name=3" evidence="3">
    <location>
        <begin position="132"/>
        <end position="154"/>
    </location>
</feature>
<feature type="topological domain" description="Extracellular" evidence="8">
    <location>
        <begin position="155"/>
        <end position="225"/>
    </location>
</feature>
<feature type="transmembrane region" description="Helical; Name=4" evidence="3">
    <location>
        <begin position="226"/>
        <end position="249"/>
    </location>
</feature>
<feature type="topological domain" description="Cytoplasmic" evidence="8">
    <location>
        <begin position="250"/>
        <end position="258"/>
    </location>
</feature>
<feature type="transmembrane region" description="Helical; Name=5" evidence="3">
    <location>
        <begin position="259"/>
        <end position="286"/>
    </location>
</feature>
<feature type="topological domain" description="Extracellular" evidence="8">
    <location>
        <begin position="287"/>
        <end position="307"/>
    </location>
</feature>
<feature type="transmembrane region" description="Helical; Name=6" evidence="3">
    <location>
        <begin position="308"/>
        <end position="329"/>
    </location>
</feature>
<feature type="topological domain" description="Cytoplasmic" evidence="8">
    <location>
        <begin position="330"/>
        <end position="334"/>
    </location>
</feature>
<feature type="intramembrane region" description="Discontinuously helical" evidence="3">
    <location>
        <begin position="335"/>
        <end position="365"/>
    </location>
</feature>
<feature type="topological domain" description="Cytoplasmic" evidence="8">
    <location>
        <begin position="366"/>
        <end position="374"/>
    </location>
</feature>
<feature type="transmembrane region" description="Helical; Name=7" evidence="3">
    <location>
        <begin position="375"/>
        <end position="401"/>
    </location>
</feature>
<feature type="topological domain" description="Extracellular" evidence="8">
    <location>
        <begin position="402"/>
        <end position="414"/>
    </location>
</feature>
<feature type="intramembrane region" description="Discontinuously helical" evidence="3">
    <location>
        <begin position="415"/>
        <end position="448"/>
    </location>
</feature>
<feature type="topological domain" description="Extracellular" evidence="8">
    <location>
        <begin position="449"/>
        <end position="461"/>
    </location>
</feature>
<feature type="transmembrane region" description="Helical; Name=8" evidence="3">
    <location>
        <begin position="462"/>
        <end position="483"/>
    </location>
</feature>
<feature type="topological domain" description="Cytoplasmic" evidence="8">
    <location>
        <begin position="484"/>
        <end position="542"/>
    </location>
</feature>
<feature type="region of interest" description="Disordered" evidence="7">
    <location>
        <begin position="509"/>
        <end position="542"/>
    </location>
</feature>
<feature type="binding site" evidence="2">
    <location>
        <position position="383"/>
    </location>
    <ligand>
        <name>Na(+)</name>
        <dbReference type="ChEBI" id="CHEBI:29101"/>
        <label>1</label>
    </ligand>
</feature>
<feature type="binding site" evidence="3">
    <location>
        <position position="385"/>
    </location>
    <ligand>
        <name>Na(+)</name>
        <dbReference type="ChEBI" id="CHEBI:29101"/>
        <label>2</label>
    </ligand>
</feature>
<feature type="binding site" evidence="2">
    <location>
        <position position="387"/>
    </location>
    <ligand>
        <name>Na(+)</name>
        <dbReference type="ChEBI" id="CHEBI:29101"/>
        <label>1</label>
    </ligand>
</feature>
<feature type="binding site" evidence="2">
    <location>
        <position position="472"/>
    </location>
    <ligand>
        <name>Na(+)</name>
        <dbReference type="ChEBI" id="CHEBI:29101"/>
        <label>1</label>
    </ligand>
</feature>
<feature type="binding site" evidence="2">
    <location>
        <position position="476"/>
    </location>
    <ligand>
        <name>Na(+)</name>
        <dbReference type="ChEBI" id="CHEBI:29101"/>
        <label>1</label>
    </ligand>
</feature>
<feature type="modified residue" description="N-acetylmethionine" evidence="5">
    <location>
        <position position="1"/>
    </location>
</feature>
<feature type="modified residue" description="Phosphoserine" evidence="5">
    <location>
        <position position="494"/>
    </location>
</feature>
<feature type="modified residue" description="Phosphothreonine" evidence="5">
    <location>
        <position position="495"/>
    </location>
</feature>
<feature type="modified residue" description="Phosphoserine" evidence="5">
    <location>
        <position position="504"/>
    </location>
</feature>
<feature type="modified residue" description="Phosphoserine" evidence="5">
    <location>
        <position position="536"/>
    </location>
</feature>
<feature type="modified residue" description="Phosphoserine" evidence="5">
    <location>
        <position position="540"/>
    </location>
</feature>
<feature type="glycosylation site" description="N-linked (GlcNAc...) asparagine" evidence="6">
    <location>
        <position position="164"/>
    </location>
</feature>
<feature type="glycosylation site" description="N-linked (GlcNAc...) asparagine" evidence="6">
    <location>
        <position position="213"/>
    </location>
</feature>